<accession>P27746</accession>
<accession>Q0K4X3</accession>
<keyword id="KW-0006">Acetoin catabolism</keyword>
<keyword id="KW-0903">Direct protein sequencing</keyword>
<keyword id="KW-0560">Oxidoreductase</keyword>
<keyword id="KW-1185">Reference proteome</keyword>
<sequence>MARKLSIKLAINEAIDQEMTRDPSVIMLGEDIVGGAGADGEKDAWGGVLGVTKGLYAKHGDRLLDTPLSESAYVGAAIGAAACGMRPIAELMFIDFMGVCFDQIFNQAAKFRYMFGGKAETPVVIRAMVGAGFRAAAQHSQMLTPLFTHIPGLKVVCPSTPYDTKGLLIQAIRDNDPVIFCEHKNLYGLEGEVPEGAYAIPFGEANIVRDGKDVSIVTYGLMVHRALEAAATLAKEGIEAEIVDLRTLSPLDMDTVLESVENTGRLVVVDEASPRCNIATDISAQVAQQAFGALKAGIEMVCPPHTPVPFSPTLEDLYIPSAAQIAAAARKTMKGGKH</sequence>
<organism>
    <name type="scientific">Cupriavidus necator (strain ATCC 17699 / DSM 428 / KCTC 22496 / NCIMB 10442 / H16 / Stanier 337)</name>
    <name type="common">Ralstonia eutropha</name>
    <dbReference type="NCBI Taxonomy" id="381666"/>
    <lineage>
        <taxon>Bacteria</taxon>
        <taxon>Pseudomonadati</taxon>
        <taxon>Pseudomonadota</taxon>
        <taxon>Betaproteobacteria</taxon>
        <taxon>Burkholderiales</taxon>
        <taxon>Burkholderiaceae</taxon>
        <taxon>Cupriavidus</taxon>
    </lineage>
</organism>
<evidence type="ECO:0000269" key="1">
    <source>
    </source>
</evidence>
<comment type="function">
    <text>Catalyzes the 2,6-dichlorophenolindophenol-dependent cleavage of acetoin into acetate and acetaldehyde, in vitro. The beta subunit is probably not the catalytic subunit of the enzyme.</text>
</comment>
<comment type="pathway">
    <text>Ketone degradation; acetoin degradation.</text>
</comment>
<comment type="subunit">
    <text>Tetramer of 2 alpha and 2 beta subunits.</text>
</comment>
<comment type="induction">
    <text>By growth on acetoin.</text>
</comment>
<reference key="1">
    <citation type="journal article" date="1991" name="J. Bacteriol.">
        <title>Identification and molecular characterization of the Alcaligenes eutrophus H16 aco operon genes involved in acetoin catabolism.</title>
        <authorList>
            <person name="Priefert H."/>
            <person name="Hein S."/>
            <person name="Krueger N."/>
            <person name="Zeh K."/>
            <person name="Schmidt B."/>
            <person name="Steinbuechel A."/>
        </authorList>
    </citation>
    <scope>NUCLEOTIDE SEQUENCE [GENOMIC DNA]</scope>
    <scope>PROTEIN SEQUENCE OF 2-23</scope>
</reference>
<reference key="2">
    <citation type="journal article" date="2006" name="Nat. Biotechnol.">
        <title>Genome sequence of the bioplastic-producing 'Knallgas' bacterium Ralstonia eutropha H16.</title>
        <authorList>
            <person name="Pohlmann A."/>
            <person name="Fricke W.F."/>
            <person name="Reinecke F."/>
            <person name="Kusian B."/>
            <person name="Liesegang H."/>
            <person name="Cramm R."/>
            <person name="Eitinger T."/>
            <person name="Ewering C."/>
            <person name="Poetter M."/>
            <person name="Schwartz E."/>
            <person name="Strittmatter A."/>
            <person name="Voss I."/>
            <person name="Gottschalk G."/>
            <person name="Steinbuechel A."/>
            <person name="Friedrich B."/>
            <person name="Bowien B."/>
        </authorList>
    </citation>
    <scope>NUCLEOTIDE SEQUENCE [LARGE SCALE GENOMIC DNA]</scope>
    <source>
        <strain>ATCC 17699 / DSM 428 / KCTC 22496 / NCIMB 10442 / H16 / Stanier 337</strain>
    </source>
</reference>
<proteinExistence type="evidence at protein level"/>
<protein>
    <recommendedName>
        <fullName>Acetoin:2,6-dichlorophenolindophenol oxidoreductase subunit beta</fullName>
        <shortName>Acetoin:DCPIP oxidoreductase-beta</shortName>
        <shortName>Ao:DCPIP OR</shortName>
        <ecNumber>1.1.1.-</ecNumber>
    </recommendedName>
    <alternativeName>
        <fullName>TPP-dependent acetoin dehydrogenase E1 subunit beta</fullName>
    </alternativeName>
</protein>
<name>ACOB_CUPNH</name>
<dbReference type="EC" id="1.1.1.-"/>
<dbReference type="EMBL" id="M66060">
    <property type="protein sequence ID" value="AAA21949.1"/>
    <property type="molecule type" value="Genomic_DNA"/>
</dbReference>
<dbReference type="EMBL" id="AM260480">
    <property type="protein sequence ID" value="CAJ94951.1"/>
    <property type="molecule type" value="Genomic_DNA"/>
</dbReference>
<dbReference type="PIR" id="C42462">
    <property type="entry name" value="C42462"/>
</dbReference>
<dbReference type="RefSeq" id="WP_010813529.1">
    <property type="nucleotide sequence ID" value="NZ_CP039288.1"/>
</dbReference>
<dbReference type="SMR" id="P27746"/>
<dbReference type="STRING" id="381666.H16_B0145"/>
<dbReference type="KEGG" id="reh:H16_B0145"/>
<dbReference type="eggNOG" id="COG0022">
    <property type="taxonomic scope" value="Bacteria"/>
</dbReference>
<dbReference type="HOGENOM" id="CLU_012907_1_0_4"/>
<dbReference type="OrthoDB" id="9780894at2"/>
<dbReference type="BRENDA" id="2.3.1.190">
    <property type="organism ID" value="11493"/>
</dbReference>
<dbReference type="UniPathway" id="UPA00040"/>
<dbReference type="Proteomes" id="UP000008210">
    <property type="component" value="Chromosome 2"/>
</dbReference>
<dbReference type="GO" id="GO:0016491">
    <property type="term" value="F:oxidoreductase activity"/>
    <property type="evidence" value="ECO:0007669"/>
    <property type="project" value="UniProtKB-KW"/>
</dbReference>
<dbReference type="GO" id="GO:0045150">
    <property type="term" value="P:acetoin catabolic process"/>
    <property type="evidence" value="ECO:0007669"/>
    <property type="project" value="UniProtKB-UniPathway"/>
</dbReference>
<dbReference type="CDD" id="cd07036">
    <property type="entry name" value="TPP_PYR_E1-PDHc-beta_like"/>
    <property type="match status" value="1"/>
</dbReference>
<dbReference type="FunFam" id="3.40.50.920:FF:000001">
    <property type="entry name" value="Pyruvate dehydrogenase E1 beta subunit"/>
    <property type="match status" value="1"/>
</dbReference>
<dbReference type="FunFam" id="3.40.50.970:FF:000001">
    <property type="entry name" value="Pyruvate dehydrogenase E1 beta subunit"/>
    <property type="match status" value="1"/>
</dbReference>
<dbReference type="Gene3D" id="3.40.50.920">
    <property type="match status" value="1"/>
</dbReference>
<dbReference type="Gene3D" id="3.40.50.970">
    <property type="match status" value="1"/>
</dbReference>
<dbReference type="InterPro" id="IPR029061">
    <property type="entry name" value="THDP-binding"/>
</dbReference>
<dbReference type="InterPro" id="IPR009014">
    <property type="entry name" value="Transketo_C/PFOR_II"/>
</dbReference>
<dbReference type="InterPro" id="IPR005475">
    <property type="entry name" value="Transketolase-like_Pyr-bd"/>
</dbReference>
<dbReference type="InterPro" id="IPR033248">
    <property type="entry name" value="Transketolase_C"/>
</dbReference>
<dbReference type="NCBIfam" id="NF006667">
    <property type="entry name" value="PRK09212.1"/>
    <property type="match status" value="1"/>
</dbReference>
<dbReference type="PANTHER" id="PTHR43257:SF3">
    <property type="entry name" value="ACETOIN:2,6-DICHLOROPHENOLINDOPHENOL OXIDOREDUCTASE SUBUNIT BETA"/>
    <property type="match status" value="1"/>
</dbReference>
<dbReference type="PANTHER" id="PTHR43257">
    <property type="entry name" value="PYRUVATE DEHYDROGENASE E1 COMPONENT BETA SUBUNIT"/>
    <property type="match status" value="1"/>
</dbReference>
<dbReference type="Pfam" id="PF02779">
    <property type="entry name" value="Transket_pyr"/>
    <property type="match status" value="1"/>
</dbReference>
<dbReference type="Pfam" id="PF02780">
    <property type="entry name" value="Transketolase_C"/>
    <property type="match status" value="1"/>
</dbReference>
<dbReference type="SMART" id="SM00861">
    <property type="entry name" value="Transket_pyr"/>
    <property type="match status" value="1"/>
</dbReference>
<dbReference type="SUPFAM" id="SSF52518">
    <property type="entry name" value="Thiamin diphosphate-binding fold (THDP-binding)"/>
    <property type="match status" value="1"/>
</dbReference>
<dbReference type="SUPFAM" id="SSF52922">
    <property type="entry name" value="TK C-terminal domain-like"/>
    <property type="match status" value="1"/>
</dbReference>
<gene>
    <name type="primary">acoB</name>
    <name type="ordered locus">H16_B0145</name>
</gene>
<feature type="initiator methionine" description="Removed" evidence="1">
    <location>
        <position position="1"/>
    </location>
</feature>
<feature type="chain" id="PRO_0000162308" description="Acetoin:2,6-dichlorophenolindophenol oxidoreductase subunit beta">
    <location>
        <begin position="2"/>
        <end position="338"/>
    </location>
</feature>